<organism>
    <name type="scientific">Staurastrum punctulatum</name>
    <name type="common">Green alga</name>
    <name type="synonym">Cosmoastrum punctulatum</name>
    <dbReference type="NCBI Taxonomy" id="102822"/>
    <lineage>
        <taxon>Eukaryota</taxon>
        <taxon>Viridiplantae</taxon>
        <taxon>Streptophyta</taxon>
        <taxon>Zygnematophyceae</taxon>
        <taxon>Zygnematophycidae</taxon>
        <taxon>Desmidiales</taxon>
        <taxon>Desmidiaceae</taxon>
        <taxon>Staurastrum</taxon>
    </lineage>
</organism>
<protein>
    <recommendedName>
        <fullName evidence="2">Small ribosomal subunit protein uS15c</fullName>
    </recommendedName>
    <alternativeName>
        <fullName>30S ribosomal protein S15, chloroplastic</fullName>
    </alternativeName>
</protein>
<evidence type="ECO:0000250" key="1"/>
<evidence type="ECO:0000305" key="2"/>
<keyword id="KW-0150">Chloroplast</keyword>
<keyword id="KW-0934">Plastid</keyword>
<keyword id="KW-0687">Ribonucleoprotein</keyword>
<keyword id="KW-0689">Ribosomal protein</keyword>
<dbReference type="EMBL" id="AY958085">
    <property type="protein sequence ID" value="AAX45753.1"/>
    <property type="molecule type" value="Genomic_DNA"/>
</dbReference>
<dbReference type="RefSeq" id="YP_636376.1">
    <property type="nucleotide sequence ID" value="NC_008116.1"/>
</dbReference>
<dbReference type="SMR" id="Q32S00"/>
<dbReference type="GeneID" id="4108595"/>
<dbReference type="GO" id="GO:0009507">
    <property type="term" value="C:chloroplast"/>
    <property type="evidence" value="ECO:0007669"/>
    <property type="project" value="UniProtKB-SubCell"/>
</dbReference>
<dbReference type="GO" id="GO:1990904">
    <property type="term" value="C:ribonucleoprotein complex"/>
    <property type="evidence" value="ECO:0007669"/>
    <property type="project" value="UniProtKB-KW"/>
</dbReference>
<dbReference type="GO" id="GO:0005840">
    <property type="term" value="C:ribosome"/>
    <property type="evidence" value="ECO:0007669"/>
    <property type="project" value="UniProtKB-KW"/>
</dbReference>
<dbReference type="GO" id="GO:0003735">
    <property type="term" value="F:structural constituent of ribosome"/>
    <property type="evidence" value="ECO:0007669"/>
    <property type="project" value="InterPro"/>
</dbReference>
<dbReference type="GO" id="GO:0006412">
    <property type="term" value="P:translation"/>
    <property type="evidence" value="ECO:0007669"/>
    <property type="project" value="UniProtKB-UniRule"/>
</dbReference>
<dbReference type="CDD" id="cd00677">
    <property type="entry name" value="S15_NS1_EPRS_RNA-bind"/>
    <property type="match status" value="1"/>
</dbReference>
<dbReference type="Gene3D" id="1.10.287.10">
    <property type="entry name" value="S15/NS1, RNA-binding"/>
    <property type="match status" value="1"/>
</dbReference>
<dbReference type="HAMAP" id="MF_01343_B">
    <property type="entry name" value="Ribosomal_uS15_B"/>
    <property type="match status" value="1"/>
</dbReference>
<dbReference type="InterPro" id="IPR000589">
    <property type="entry name" value="Ribosomal_uS15"/>
</dbReference>
<dbReference type="InterPro" id="IPR005290">
    <property type="entry name" value="Ribosomal_uS15_bac-type"/>
</dbReference>
<dbReference type="InterPro" id="IPR009068">
    <property type="entry name" value="uS15_NS1_RNA-bd_sf"/>
</dbReference>
<dbReference type="NCBIfam" id="TIGR00952">
    <property type="entry name" value="S15_bact"/>
    <property type="match status" value="1"/>
</dbReference>
<dbReference type="PANTHER" id="PTHR23321">
    <property type="entry name" value="RIBOSOMAL PROTEIN S15, BACTERIAL AND ORGANELLAR"/>
    <property type="match status" value="1"/>
</dbReference>
<dbReference type="PANTHER" id="PTHR23321:SF26">
    <property type="entry name" value="SMALL RIBOSOMAL SUBUNIT PROTEIN US15M"/>
    <property type="match status" value="1"/>
</dbReference>
<dbReference type="Pfam" id="PF00312">
    <property type="entry name" value="Ribosomal_S15"/>
    <property type="match status" value="1"/>
</dbReference>
<dbReference type="SMART" id="SM01387">
    <property type="entry name" value="Ribosomal_S15"/>
    <property type="match status" value="1"/>
</dbReference>
<dbReference type="SUPFAM" id="SSF47060">
    <property type="entry name" value="S15/NS1 RNA-binding domain"/>
    <property type="match status" value="1"/>
</dbReference>
<dbReference type="PROSITE" id="PS00362">
    <property type="entry name" value="RIBOSOMAL_S15"/>
    <property type="match status" value="1"/>
</dbReference>
<feature type="chain" id="PRO_0000115655" description="Small ribosomal subunit protein uS15c">
    <location>
        <begin position="1"/>
        <end position="111"/>
    </location>
</feature>
<reference key="1">
    <citation type="journal article" date="2005" name="BMC Biol.">
        <title>The complete chloroplast DNA sequences of the charophycean green algae Staurastrum and Zygnema reveal that the chloroplast genome underwent extensive changes during the evolution of the Zygnematales.</title>
        <authorList>
            <person name="Turmel M."/>
            <person name="Otis C."/>
            <person name="Lemieux C."/>
        </authorList>
    </citation>
    <scope>NUCLEOTIDE SEQUENCE [LARGE SCALE GENOMIC DNA]</scope>
</reference>
<gene>
    <name type="primary">rps15</name>
</gene>
<comment type="subunit">
    <text evidence="1">Part of the 30S ribosomal subunit.</text>
</comment>
<comment type="subcellular location">
    <subcellularLocation>
        <location>Plastid</location>
        <location>Chloroplast</location>
    </subcellularLocation>
</comment>
<comment type="similarity">
    <text evidence="2">Belongs to the universal ribosomal protein uS15 family.</text>
</comment>
<geneLocation type="chloroplast"/>
<sequence length="111" mass="12843">MKLHKKKLNITMTKQFIQKFPSNTVGSGGKTLLSKFQENSGLTETQIYILTQRVARLSSHLKNHNKDYSSQRGLRKLLGKRKRLLAYLSNEDVERYENLLIQLGIRGLKKI</sequence>
<proteinExistence type="inferred from homology"/>
<accession>Q32S00</accession>
<name>RR15_STAPU</name>